<feature type="chain" id="PRO_0000277429" description="Ribulose bisphosphate carboxylase small subunit">
    <location>
        <begin position="1"/>
        <end position="138"/>
    </location>
</feature>
<proteinExistence type="inferred from homology"/>
<evidence type="ECO:0000255" key="1">
    <source>
        <dbReference type="HAMAP-Rule" id="MF_00859"/>
    </source>
</evidence>
<accession>Q760S4</accession>
<comment type="function">
    <text evidence="1">RuBisCO catalyzes two reactions: the carboxylation of D-ribulose 1,5-bisphosphate, the primary event in carbon dioxide fixation, as well as the oxidative fragmentation of the pentose substrate in the photorespiration process. Both reactions occur simultaneously and in competition at the same active site. Although the small subunit is not catalytic it is essential for maximal activity.</text>
</comment>
<comment type="subunit">
    <text evidence="1">Heterohexadecamer of 8 large and 8 small subunits.</text>
</comment>
<comment type="subcellular location">
    <subcellularLocation>
        <location evidence="1">Plastid</location>
        <location evidence="1">Chloroplast</location>
    </subcellularLocation>
</comment>
<comment type="miscellaneous">
    <text>In this alga, in contrast to plants, the small subunit is encoded in the chloroplast.</text>
</comment>
<comment type="miscellaneous">
    <text evidence="1">The basic functional RuBisCO is composed of a large chain homodimer in a 'head-to-tail' conformation. In form I RuBisCO this homodimer is arranged in a barrel-like tetramer with the small subunits forming a tetrameric 'cap' on each end of the 'barrel'.</text>
</comment>
<comment type="similarity">
    <text evidence="1">Belongs to the RuBisCO small chain family.</text>
</comment>
<organism>
    <name type="scientific">Pyropia suborbiculata</name>
    <name type="common">Red alga</name>
    <dbReference type="NCBI Taxonomy" id="1185355"/>
    <lineage>
        <taxon>Eukaryota</taxon>
        <taxon>Rhodophyta</taxon>
        <taxon>Bangiophyceae</taxon>
        <taxon>Bangiales</taxon>
        <taxon>Bangiaceae</taxon>
        <taxon>Pyropia</taxon>
    </lineage>
</organism>
<gene>
    <name evidence="1" type="primary">rbcS</name>
</gene>
<name>RBS_PORCA</name>
<protein>
    <recommendedName>
        <fullName evidence="1">Ribulose bisphosphate carboxylase small subunit</fullName>
        <shortName evidence="1">RuBisCO small subunit</shortName>
    </recommendedName>
</protein>
<dbReference type="EMBL" id="AB118580">
    <property type="protein sequence ID" value="BAC84928.1"/>
    <property type="molecule type" value="Genomic_DNA"/>
</dbReference>
<dbReference type="SMR" id="Q760S4"/>
<dbReference type="GO" id="GO:0009507">
    <property type="term" value="C:chloroplast"/>
    <property type="evidence" value="ECO:0007669"/>
    <property type="project" value="UniProtKB-SubCell"/>
</dbReference>
<dbReference type="GO" id="GO:0016984">
    <property type="term" value="F:ribulose-bisphosphate carboxylase activity"/>
    <property type="evidence" value="ECO:0007669"/>
    <property type="project" value="UniProtKB-UniRule"/>
</dbReference>
<dbReference type="GO" id="GO:0019253">
    <property type="term" value="P:reductive pentose-phosphate cycle"/>
    <property type="evidence" value="ECO:0007669"/>
    <property type="project" value="UniProtKB-UniRule"/>
</dbReference>
<dbReference type="CDD" id="cd03527">
    <property type="entry name" value="RuBisCO_small"/>
    <property type="match status" value="1"/>
</dbReference>
<dbReference type="Gene3D" id="3.30.190.10">
    <property type="entry name" value="Ribulose bisphosphate carboxylase, small subunit"/>
    <property type="match status" value="1"/>
</dbReference>
<dbReference type="HAMAP" id="MF_00859">
    <property type="entry name" value="RuBisCO_S_bact"/>
    <property type="match status" value="1"/>
</dbReference>
<dbReference type="InterPro" id="IPR024681">
    <property type="entry name" value="RuBisCO_ssu"/>
</dbReference>
<dbReference type="InterPro" id="IPR000894">
    <property type="entry name" value="RuBisCO_ssu_dom"/>
</dbReference>
<dbReference type="InterPro" id="IPR036385">
    <property type="entry name" value="RuBisCO_ssu_sf"/>
</dbReference>
<dbReference type="PANTHER" id="PTHR31262">
    <property type="entry name" value="RIBULOSE BISPHOSPHATE CARBOXYLASE SMALL CHAIN 1, CHLOROPLASTIC"/>
    <property type="match status" value="1"/>
</dbReference>
<dbReference type="PANTHER" id="PTHR31262:SF23">
    <property type="entry name" value="RIBULOSE BISPHOSPHATE CARBOXYLASE SMALL SUBUNIT"/>
    <property type="match status" value="1"/>
</dbReference>
<dbReference type="Pfam" id="PF00101">
    <property type="entry name" value="RuBisCO_small"/>
    <property type="match status" value="1"/>
</dbReference>
<dbReference type="SMART" id="SM00961">
    <property type="entry name" value="RuBisCO_small"/>
    <property type="match status" value="1"/>
</dbReference>
<dbReference type="SUPFAM" id="SSF55239">
    <property type="entry name" value="RuBisCO, small subunit"/>
    <property type="match status" value="1"/>
</dbReference>
<keyword id="KW-0113">Calvin cycle</keyword>
<keyword id="KW-0120">Carbon dioxide fixation</keyword>
<keyword id="KW-0150">Chloroplast</keyword>
<keyword id="KW-0601">Photorespiration</keyword>
<keyword id="KW-0602">Photosynthesis</keyword>
<keyword id="KW-0934">Plastid</keyword>
<sequence>MRLTQGTFSFLPDLTDEQISKQLTYIVSKGLSANVEYTDDPHPRNSYWELWGLPLFDVKDASAVMYEISSCRKAKPNYYIKVNAFDNTRGIESCVMSFIVNRPINEPGFLLQRQDFEGRTMKYSLHSYATEKPEGARY</sequence>
<reference key="1">
    <citation type="submission" date="2003-08" db="EMBL/GenBank/DDBJ databases">
        <title>Species determination utilizing Porphyra (Rhodophyta) plastid DNA RuBisCo sequences.</title>
        <authorList>
            <person name="Kito H."/>
            <person name="Kunimoto M."/>
            <person name="Mizukami Y."/>
            <person name="Murase N."/>
            <person name="Kuroki T."/>
            <person name="Taruta M."/>
            <person name="Levine I."/>
        </authorList>
    </citation>
    <scope>NUCLEOTIDE SEQUENCE [GENOMIC DNA]</scope>
    <source>
        <tissue>Thallus</tissue>
    </source>
</reference>
<geneLocation type="chloroplast"/>